<reference key="1">
    <citation type="journal article" date="2000" name="Nature">
        <title>The genome sequence of the plant pathogen Xylella fastidiosa.</title>
        <authorList>
            <person name="Simpson A.J.G."/>
            <person name="Reinach F.C."/>
            <person name="Arruda P."/>
            <person name="Abreu F.A."/>
            <person name="Acencio M."/>
            <person name="Alvarenga R."/>
            <person name="Alves L.M.C."/>
            <person name="Araya J.E."/>
            <person name="Baia G.S."/>
            <person name="Baptista C.S."/>
            <person name="Barros M.H."/>
            <person name="Bonaccorsi E.D."/>
            <person name="Bordin S."/>
            <person name="Bove J.M."/>
            <person name="Briones M.R.S."/>
            <person name="Bueno M.R.P."/>
            <person name="Camargo A.A."/>
            <person name="Camargo L.E.A."/>
            <person name="Carraro D.M."/>
            <person name="Carrer H."/>
            <person name="Colauto N.B."/>
            <person name="Colombo C."/>
            <person name="Costa F.F."/>
            <person name="Costa M.C.R."/>
            <person name="Costa-Neto C.M."/>
            <person name="Coutinho L.L."/>
            <person name="Cristofani M."/>
            <person name="Dias-Neto E."/>
            <person name="Docena C."/>
            <person name="El-Dorry H."/>
            <person name="Facincani A.P."/>
            <person name="Ferreira A.J.S."/>
            <person name="Ferreira V.C.A."/>
            <person name="Ferro J.A."/>
            <person name="Fraga J.S."/>
            <person name="Franca S.C."/>
            <person name="Franco M.C."/>
            <person name="Frohme M."/>
            <person name="Furlan L.R."/>
            <person name="Garnier M."/>
            <person name="Goldman G.H."/>
            <person name="Goldman M.H.S."/>
            <person name="Gomes S.L."/>
            <person name="Gruber A."/>
            <person name="Ho P.L."/>
            <person name="Hoheisel J.D."/>
            <person name="Junqueira M.L."/>
            <person name="Kemper E.L."/>
            <person name="Kitajima J.P."/>
            <person name="Krieger J.E."/>
            <person name="Kuramae E.E."/>
            <person name="Laigret F."/>
            <person name="Lambais M.R."/>
            <person name="Leite L.C.C."/>
            <person name="Lemos E.G.M."/>
            <person name="Lemos M.V.F."/>
            <person name="Lopes S.A."/>
            <person name="Lopes C.R."/>
            <person name="Machado J.A."/>
            <person name="Machado M.A."/>
            <person name="Madeira A.M.B.N."/>
            <person name="Madeira H.M.F."/>
            <person name="Marino C.L."/>
            <person name="Marques M.V."/>
            <person name="Martins E.A.L."/>
            <person name="Martins E.M.F."/>
            <person name="Matsukuma A.Y."/>
            <person name="Menck C.F.M."/>
            <person name="Miracca E.C."/>
            <person name="Miyaki C.Y."/>
            <person name="Monteiro-Vitorello C.B."/>
            <person name="Moon D.H."/>
            <person name="Nagai M.A."/>
            <person name="Nascimento A.L.T.O."/>
            <person name="Netto L.E.S."/>
            <person name="Nhani A. Jr."/>
            <person name="Nobrega F.G."/>
            <person name="Nunes L.R."/>
            <person name="Oliveira M.A."/>
            <person name="de Oliveira M.C."/>
            <person name="de Oliveira R.C."/>
            <person name="Palmieri D.A."/>
            <person name="Paris A."/>
            <person name="Peixoto B.R."/>
            <person name="Pereira G.A.G."/>
            <person name="Pereira H.A. Jr."/>
            <person name="Pesquero J.B."/>
            <person name="Quaggio R.B."/>
            <person name="Roberto P.G."/>
            <person name="Rodrigues V."/>
            <person name="de Rosa A.J.M."/>
            <person name="de Rosa V.E. Jr."/>
            <person name="de Sa R.G."/>
            <person name="Santelli R.V."/>
            <person name="Sawasaki H.E."/>
            <person name="da Silva A.C.R."/>
            <person name="da Silva A.M."/>
            <person name="da Silva F.R."/>
            <person name="Silva W.A. Jr."/>
            <person name="da Silveira J.F."/>
            <person name="Silvestri M.L.Z."/>
            <person name="Siqueira W.J."/>
            <person name="de Souza A.A."/>
            <person name="de Souza A.P."/>
            <person name="Terenzi M.F."/>
            <person name="Truffi D."/>
            <person name="Tsai S.M."/>
            <person name="Tsuhako M.H."/>
            <person name="Vallada H."/>
            <person name="Van Sluys M.A."/>
            <person name="Verjovski-Almeida S."/>
            <person name="Vettore A.L."/>
            <person name="Zago M.A."/>
            <person name="Zatz M."/>
            <person name="Meidanis J."/>
            <person name="Setubal J.C."/>
        </authorList>
    </citation>
    <scope>NUCLEOTIDE SEQUENCE [LARGE SCALE GENOMIC DNA]</scope>
    <source>
        <strain>9a5c</strain>
    </source>
</reference>
<feature type="chain" id="PRO_0000163743" description="1-deoxy-D-xylulose 5-phosphate reductoisomerase">
    <location>
        <begin position="1"/>
        <end position="396"/>
    </location>
</feature>
<feature type="binding site" evidence="1">
    <location>
        <position position="14"/>
    </location>
    <ligand>
        <name>NADPH</name>
        <dbReference type="ChEBI" id="CHEBI:57783"/>
    </ligand>
</feature>
<feature type="binding site" evidence="1">
    <location>
        <position position="15"/>
    </location>
    <ligand>
        <name>NADPH</name>
        <dbReference type="ChEBI" id="CHEBI:57783"/>
    </ligand>
</feature>
<feature type="binding site" evidence="1">
    <location>
        <position position="16"/>
    </location>
    <ligand>
        <name>NADPH</name>
        <dbReference type="ChEBI" id="CHEBI:57783"/>
    </ligand>
</feature>
<feature type="binding site" evidence="1">
    <location>
        <position position="17"/>
    </location>
    <ligand>
        <name>NADPH</name>
        <dbReference type="ChEBI" id="CHEBI:57783"/>
    </ligand>
</feature>
<feature type="binding site" evidence="1">
    <location>
        <position position="40"/>
    </location>
    <ligand>
        <name>NADPH</name>
        <dbReference type="ChEBI" id="CHEBI:57783"/>
    </ligand>
</feature>
<feature type="binding site" evidence="1">
    <location>
        <position position="128"/>
    </location>
    <ligand>
        <name>NADPH</name>
        <dbReference type="ChEBI" id="CHEBI:57783"/>
    </ligand>
</feature>
<feature type="binding site" evidence="1">
    <location>
        <position position="129"/>
    </location>
    <ligand>
        <name>1-deoxy-D-xylulose 5-phosphate</name>
        <dbReference type="ChEBI" id="CHEBI:57792"/>
    </ligand>
</feature>
<feature type="binding site" evidence="1">
    <location>
        <position position="130"/>
    </location>
    <ligand>
        <name>NADPH</name>
        <dbReference type="ChEBI" id="CHEBI:57783"/>
    </ligand>
</feature>
<feature type="binding site" evidence="1">
    <location>
        <position position="154"/>
    </location>
    <ligand>
        <name>Mn(2+)</name>
        <dbReference type="ChEBI" id="CHEBI:29035"/>
    </ligand>
</feature>
<feature type="binding site" evidence="1">
    <location>
        <position position="155"/>
    </location>
    <ligand>
        <name>1-deoxy-D-xylulose 5-phosphate</name>
        <dbReference type="ChEBI" id="CHEBI:57792"/>
    </ligand>
</feature>
<feature type="binding site" evidence="1">
    <location>
        <position position="156"/>
    </location>
    <ligand>
        <name>1-deoxy-D-xylulose 5-phosphate</name>
        <dbReference type="ChEBI" id="CHEBI:57792"/>
    </ligand>
</feature>
<feature type="binding site" evidence="1">
    <location>
        <position position="156"/>
    </location>
    <ligand>
        <name>Mn(2+)</name>
        <dbReference type="ChEBI" id="CHEBI:29035"/>
    </ligand>
</feature>
<feature type="binding site" evidence="1">
    <location>
        <position position="180"/>
    </location>
    <ligand>
        <name>1-deoxy-D-xylulose 5-phosphate</name>
        <dbReference type="ChEBI" id="CHEBI:57792"/>
    </ligand>
</feature>
<feature type="binding site" evidence="1">
    <location>
        <position position="203"/>
    </location>
    <ligand>
        <name>1-deoxy-D-xylulose 5-phosphate</name>
        <dbReference type="ChEBI" id="CHEBI:57792"/>
    </ligand>
</feature>
<feature type="binding site" evidence="1">
    <location>
        <position position="209"/>
    </location>
    <ligand>
        <name>NADPH</name>
        <dbReference type="ChEBI" id="CHEBI:57783"/>
    </ligand>
</feature>
<feature type="binding site" evidence="1">
    <location>
        <position position="216"/>
    </location>
    <ligand>
        <name>1-deoxy-D-xylulose 5-phosphate</name>
        <dbReference type="ChEBI" id="CHEBI:57792"/>
    </ligand>
</feature>
<feature type="binding site" evidence="1">
    <location>
        <position position="221"/>
    </location>
    <ligand>
        <name>1-deoxy-D-xylulose 5-phosphate</name>
        <dbReference type="ChEBI" id="CHEBI:57792"/>
    </ligand>
</feature>
<feature type="binding site" evidence="1">
    <location>
        <position position="222"/>
    </location>
    <ligand>
        <name>1-deoxy-D-xylulose 5-phosphate</name>
        <dbReference type="ChEBI" id="CHEBI:57792"/>
    </ligand>
</feature>
<feature type="binding site" evidence="1">
    <location>
        <position position="225"/>
    </location>
    <ligand>
        <name>1-deoxy-D-xylulose 5-phosphate</name>
        <dbReference type="ChEBI" id="CHEBI:57792"/>
    </ligand>
</feature>
<feature type="binding site" evidence="1">
    <location>
        <position position="225"/>
    </location>
    <ligand>
        <name>Mn(2+)</name>
        <dbReference type="ChEBI" id="CHEBI:29035"/>
    </ligand>
</feature>
<keyword id="KW-0414">Isoprene biosynthesis</keyword>
<keyword id="KW-0464">Manganese</keyword>
<keyword id="KW-0479">Metal-binding</keyword>
<keyword id="KW-0521">NADP</keyword>
<keyword id="KW-0560">Oxidoreductase</keyword>
<evidence type="ECO:0000255" key="1">
    <source>
        <dbReference type="HAMAP-Rule" id="MF_00183"/>
    </source>
</evidence>
<proteinExistence type="inferred from homology"/>
<protein>
    <recommendedName>
        <fullName evidence="1">1-deoxy-D-xylulose 5-phosphate reductoisomerase</fullName>
        <shortName evidence="1">DXP reductoisomerase</shortName>
        <ecNumber evidence="1">1.1.1.267</ecNumber>
    </recommendedName>
    <alternativeName>
        <fullName evidence="1">1-deoxyxylulose-5-phosphate reductoisomerase</fullName>
    </alternativeName>
    <alternativeName>
        <fullName evidence="1">2-C-methyl-D-erythritol 4-phosphate synthase</fullName>
    </alternativeName>
</protein>
<comment type="function">
    <text evidence="1">Catalyzes the NADPH-dependent rearrangement and reduction of 1-deoxy-D-xylulose-5-phosphate (DXP) to 2-C-methyl-D-erythritol 4-phosphate (MEP).</text>
</comment>
<comment type="catalytic activity">
    <reaction evidence="1">
        <text>2-C-methyl-D-erythritol 4-phosphate + NADP(+) = 1-deoxy-D-xylulose 5-phosphate + NADPH + H(+)</text>
        <dbReference type="Rhea" id="RHEA:13717"/>
        <dbReference type="ChEBI" id="CHEBI:15378"/>
        <dbReference type="ChEBI" id="CHEBI:57783"/>
        <dbReference type="ChEBI" id="CHEBI:57792"/>
        <dbReference type="ChEBI" id="CHEBI:58262"/>
        <dbReference type="ChEBI" id="CHEBI:58349"/>
        <dbReference type="EC" id="1.1.1.267"/>
    </reaction>
    <physiologicalReaction direction="right-to-left" evidence="1">
        <dbReference type="Rhea" id="RHEA:13719"/>
    </physiologicalReaction>
</comment>
<comment type="cofactor">
    <cofactor evidence="1">
        <name>Mg(2+)</name>
        <dbReference type="ChEBI" id="CHEBI:18420"/>
    </cofactor>
    <cofactor evidence="1">
        <name>Mn(2+)</name>
        <dbReference type="ChEBI" id="CHEBI:29035"/>
    </cofactor>
</comment>
<comment type="pathway">
    <text evidence="1">Isoprenoid biosynthesis; isopentenyl diphosphate biosynthesis via DXP pathway; isopentenyl diphosphate from 1-deoxy-D-xylulose 5-phosphate: step 1/6.</text>
</comment>
<comment type="similarity">
    <text evidence="1">Belongs to the DXR family.</text>
</comment>
<accession>Q9PEI0</accession>
<sequence length="396" mass="42077">MTKPIRNVAVLGATGSIGAAALDVLARHPRQFHVSLLAAGQRVDALLALCHTYRPDHAVIGDATLYTTLRDGLNAAGLATKAYAGEAALAELVASTTCDTVVAAIVGAAGLHSTLAAARAGKRLLLANKESLVLAGMLLMREASISGAEIIPIDSEHNAIFQCLRSRTTDGVHRITLTASGGPFRGHNRTMLAKITPTQAMAHPTWSMGPKISVDSATLMNKGLEVIEAHHLFGLPSEQIDVLVHPQSLVHSLVEFIDGSTLAQLSLPDMRTTLAVGLSWPERIGSGVPGLDLMKHNRLDFERPDTETFSCLRLARDAMQTGGTAPAVLNAANEIAVSAFLQGRIGFLTIPALIEHALTTLPRYEADTLETLLTVDTETRRITHAALTHFPLPLPL</sequence>
<dbReference type="EC" id="1.1.1.267" evidence="1"/>
<dbReference type="EMBL" id="AE003849">
    <property type="protein sequence ID" value="AAF83858.1"/>
    <property type="molecule type" value="Genomic_DNA"/>
</dbReference>
<dbReference type="PIR" id="H82728">
    <property type="entry name" value="H82728"/>
</dbReference>
<dbReference type="SMR" id="Q9PEI0"/>
<dbReference type="STRING" id="160492.XF_1048"/>
<dbReference type="KEGG" id="xfa:XF_1048"/>
<dbReference type="eggNOG" id="COG0743">
    <property type="taxonomic scope" value="Bacteria"/>
</dbReference>
<dbReference type="HOGENOM" id="CLU_035714_4_0_6"/>
<dbReference type="UniPathway" id="UPA00056">
    <property type="reaction ID" value="UER00092"/>
</dbReference>
<dbReference type="Proteomes" id="UP000000812">
    <property type="component" value="Chromosome"/>
</dbReference>
<dbReference type="GO" id="GO:0030604">
    <property type="term" value="F:1-deoxy-D-xylulose-5-phosphate reductoisomerase activity"/>
    <property type="evidence" value="ECO:0007669"/>
    <property type="project" value="UniProtKB-UniRule"/>
</dbReference>
<dbReference type="GO" id="GO:0030145">
    <property type="term" value="F:manganese ion binding"/>
    <property type="evidence" value="ECO:0007669"/>
    <property type="project" value="TreeGrafter"/>
</dbReference>
<dbReference type="GO" id="GO:0070402">
    <property type="term" value="F:NADPH binding"/>
    <property type="evidence" value="ECO:0007669"/>
    <property type="project" value="InterPro"/>
</dbReference>
<dbReference type="GO" id="GO:0051484">
    <property type="term" value="P:isopentenyl diphosphate biosynthetic process, methylerythritol 4-phosphate pathway involved in terpenoid biosynthetic process"/>
    <property type="evidence" value="ECO:0007669"/>
    <property type="project" value="TreeGrafter"/>
</dbReference>
<dbReference type="FunFam" id="3.40.50.720:FF:000045">
    <property type="entry name" value="1-deoxy-D-xylulose 5-phosphate reductoisomerase"/>
    <property type="match status" value="1"/>
</dbReference>
<dbReference type="Gene3D" id="1.10.1740.10">
    <property type="match status" value="1"/>
</dbReference>
<dbReference type="Gene3D" id="3.40.50.720">
    <property type="entry name" value="NAD(P)-binding Rossmann-like Domain"/>
    <property type="match status" value="1"/>
</dbReference>
<dbReference type="HAMAP" id="MF_00183">
    <property type="entry name" value="DXP_reductoisom"/>
    <property type="match status" value="1"/>
</dbReference>
<dbReference type="InterPro" id="IPR003821">
    <property type="entry name" value="DXP_reductoisomerase"/>
</dbReference>
<dbReference type="InterPro" id="IPR013644">
    <property type="entry name" value="DXP_reductoisomerase_C"/>
</dbReference>
<dbReference type="InterPro" id="IPR013512">
    <property type="entry name" value="DXP_reductoisomerase_N"/>
</dbReference>
<dbReference type="InterPro" id="IPR026877">
    <property type="entry name" value="DXPR_C"/>
</dbReference>
<dbReference type="InterPro" id="IPR036169">
    <property type="entry name" value="DXPR_C_sf"/>
</dbReference>
<dbReference type="InterPro" id="IPR036291">
    <property type="entry name" value="NAD(P)-bd_dom_sf"/>
</dbReference>
<dbReference type="NCBIfam" id="TIGR00243">
    <property type="entry name" value="Dxr"/>
    <property type="match status" value="1"/>
</dbReference>
<dbReference type="PANTHER" id="PTHR30525">
    <property type="entry name" value="1-DEOXY-D-XYLULOSE 5-PHOSPHATE REDUCTOISOMERASE"/>
    <property type="match status" value="1"/>
</dbReference>
<dbReference type="PANTHER" id="PTHR30525:SF0">
    <property type="entry name" value="1-DEOXY-D-XYLULOSE 5-PHOSPHATE REDUCTOISOMERASE, CHLOROPLASTIC"/>
    <property type="match status" value="1"/>
</dbReference>
<dbReference type="Pfam" id="PF08436">
    <property type="entry name" value="DXP_redisom_C"/>
    <property type="match status" value="1"/>
</dbReference>
<dbReference type="Pfam" id="PF02670">
    <property type="entry name" value="DXP_reductoisom"/>
    <property type="match status" value="1"/>
</dbReference>
<dbReference type="Pfam" id="PF13288">
    <property type="entry name" value="DXPR_C"/>
    <property type="match status" value="1"/>
</dbReference>
<dbReference type="PIRSF" id="PIRSF006205">
    <property type="entry name" value="Dxp_reductismrs"/>
    <property type="match status" value="1"/>
</dbReference>
<dbReference type="SUPFAM" id="SSF69055">
    <property type="entry name" value="1-deoxy-D-xylulose-5-phosphate reductoisomerase, C-terminal domain"/>
    <property type="match status" value="1"/>
</dbReference>
<dbReference type="SUPFAM" id="SSF55347">
    <property type="entry name" value="Glyceraldehyde-3-phosphate dehydrogenase-like, C-terminal domain"/>
    <property type="match status" value="1"/>
</dbReference>
<dbReference type="SUPFAM" id="SSF51735">
    <property type="entry name" value="NAD(P)-binding Rossmann-fold domains"/>
    <property type="match status" value="1"/>
</dbReference>
<gene>
    <name evidence="1" type="primary">dxr</name>
    <name type="ordered locus">XF_1048</name>
</gene>
<organism>
    <name type="scientific">Xylella fastidiosa (strain 9a5c)</name>
    <dbReference type="NCBI Taxonomy" id="160492"/>
    <lineage>
        <taxon>Bacteria</taxon>
        <taxon>Pseudomonadati</taxon>
        <taxon>Pseudomonadota</taxon>
        <taxon>Gammaproteobacteria</taxon>
        <taxon>Lysobacterales</taxon>
        <taxon>Lysobacteraceae</taxon>
        <taxon>Xylella</taxon>
    </lineage>
</organism>
<name>DXR_XYLFA</name>